<evidence type="ECO:0000255" key="1">
    <source>
        <dbReference type="HAMAP-Rule" id="MF_00391"/>
    </source>
</evidence>
<evidence type="ECO:0000256" key="2">
    <source>
        <dbReference type="SAM" id="MobiDB-lite"/>
    </source>
</evidence>
<evidence type="ECO:0000305" key="3"/>
<gene>
    <name evidence="1" type="primary">rpmH</name>
    <name type="ordered locus">YPN_3956</name>
    <name type="ORF">YP516_4489</name>
</gene>
<sequence length="46" mass="5426">MKRTFQPSVLKRNRSHGFRARMATKNGRQVLARRRAKSRSRLTVSK</sequence>
<dbReference type="EMBL" id="CP000305">
    <property type="protein sequence ID" value="ABG20283.1"/>
    <property type="molecule type" value="Genomic_DNA"/>
</dbReference>
<dbReference type="EMBL" id="ACNQ01000019">
    <property type="protein sequence ID" value="EEO74879.1"/>
    <property type="molecule type" value="Genomic_DNA"/>
</dbReference>
<dbReference type="RefSeq" id="WP_002220736.1">
    <property type="nucleotide sequence ID" value="NZ_ACNQ01000019.1"/>
</dbReference>
<dbReference type="SMR" id="Q1CCJ7"/>
<dbReference type="GeneID" id="97458397"/>
<dbReference type="KEGG" id="ypn:YPN_3956"/>
<dbReference type="HOGENOM" id="CLU_129938_2_1_6"/>
<dbReference type="Proteomes" id="UP000008936">
    <property type="component" value="Chromosome"/>
</dbReference>
<dbReference type="GO" id="GO:1990904">
    <property type="term" value="C:ribonucleoprotein complex"/>
    <property type="evidence" value="ECO:0007669"/>
    <property type="project" value="UniProtKB-KW"/>
</dbReference>
<dbReference type="GO" id="GO:0005840">
    <property type="term" value="C:ribosome"/>
    <property type="evidence" value="ECO:0007669"/>
    <property type="project" value="UniProtKB-KW"/>
</dbReference>
<dbReference type="GO" id="GO:0003735">
    <property type="term" value="F:structural constituent of ribosome"/>
    <property type="evidence" value="ECO:0007669"/>
    <property type="project" value="InterPro"/>
</dbReference>
<dbReference type="GO" id="GO:0006412">
    <property type="term" value="P:translation"/>
    <property type="evidence" value="ECO:0007669"/>
    <property type="project" value="UniProtKB-UniRule"/>
</dbReference>
<dbReference type="FunFam" id="1.10.287.3980:FF:000001">
    <property type="entry name" value="Mitochondrial ribosomal protein L34"/>
    <property type="match status" value="1"/>
</dbReference>
<dbReference type="Gene3D" id="1.10.287.3980">
    <property type="match status" value="1"/>
</dbReference>
<dbReference type="HAMAP" id="MF_00391">
    <property type="entry name" value="Ribosomal_bL34"/>
    <property type="match status" value="1"/>
</dbReference>
<dbReference type="InterPro" id="IPR000271">
    <property type="entry name" value="Ribosomal_bL34"/>
</dbReference>
<dbReference type="InterPro" id="IPR020939">
    <property type="entry name" value="Ribosomal_bL34_CS"/>
</dbReference>
<dbReference type="NCBIfam" id="TIGR01030">
    <property type="entry name" value="rpmH_bact"/>
    <property type="match status" value="1"/>
</dbReference>
<dbReference type="PANTHER" id="PTHR14503:SF4">
    <property type="entry name" value="LARGE RIBOSOMAL SUBUNIT PROTEIN BL34M"/>
    <property type="match status" value="1"/>
</dbReference>
<dbReference type="PANTHER" id="PTHR14503">
    <property type="entry name" value="MITOCHONDRIAL RIBOSOMAL PROTEIN 34 FAMILY MEMBER"/>
    <property type="match status" value="1"/>
</dbReference>
<dbReference type="Pfam" id="PF00468">
    <property type="entry name" value="Ribosomal_L34"/>
    <property type="match status" value="1"/>
</dbReference>
<dbReference type="PROSITE" id="PS00784">
    <property type="entry name" value="RIBOSOMAL_L34"/>
    <property type="match status" value="1"/>
</dbReference>
<reference key="1">
    <citation type="journal article" date="2006" name="J. Bacteriol.">
        <title>Complete genome sequence of Yersinia pestis strains Antiqua and Nepal516: evidence of gene reduction in an emerging pathogen.</title>
        <authorList>
            <person name="Chain P.S.G."/>
            <person name="Hu P."/>
            <person name="Malfatti S.A."/>
            <person name="Radnedge L."/>
            <person name="Larimer F."/>
            <person name="Vergez L.M."/>
            <person name="Worsham P."/>
            <person name="Chu M.C."/>
            <person name="Andersen G.L."/>
        </authorList>
    </citation>
    <scope>NUCLEOTIDE SEQUENCE [LARGE SCALE GENOMIC DNA]</scope>
    <source>
        <strain>Nepal516</strain>
    </source>
</reference>
<reference key="2">
    <citation type="submission" date="2009-04" db="EMBL/GenBank/DDBJ databases">
        <title>Yersinia pestis Nepal516A whole genome shotgun sequencing project.</title>
        <authorList>
            <person name="Plunkett G. III"/>
            <person name="Anderson B.D."/>
            <person name="Baumler D.J."/>
            <person name="Burland V."/>
            <person name="Cabot E.L."/>
            <person name="Glasner J.D."/>
            <person name="Mau B."/>
            <person name="Neeno-Eckwall E."/>
            <person name="Perna N.T."/>
            <person name="Munk A.C."/>
            <person name="Tapia R."/>
            <person name="Green L.D."/>
            <person name="Rogers Y.C."/>
            <person name="Detter J.C."/>
            <person name="Bruce D.C."/>
            <person name="Brettin T.S."/>
        </authorList>
    </citation>
    <scope>NUCLEOTIDE SEQUENCE [LARGE SCALE GENOMIC DNA]</scope>
    <source>
        <strain>Nepal516</strain>
    </source>
</reference>
<accession>Q1CCJ7</accession>
<accession>D1Q2X6</accession>
<comment type="similarity">
    <text evidence="1">Belongs to the bacterial ribosomal protein bL34 family.</text>
</comment>
<keyword id="KW-0687">Ribonucleoprotein</keyword>
<keyword id="KW-0689">Ribosomal protein</keyword>
<feature type="chain" id="PRO_1000013497" description="Large ribosomal subunit protein bL34">
    <location>
        <begin position="1"/>
        <end position="46"/>
    </location>
</feature>
<feature type="region of interest" description="Disordered" evidence="2">
    <location>
        <begin position="26"/>
        <end position="46"/>
    </location>
</feature>
<feature type="compositionally biased region" description="Basic residues" evidence="2">
    <location>
        <begin position="31"/>
        <end position="40"/>
    </location>
</feature>
<organism>
    <name type="scientific">Yersinia pestis bv. Antiqua (strain Nepal516)</name>
    <dbReference type="NCBI Taxonomy" id="377628"/>
    <lineage>
        <taxon>Bacteria</taxon>
        <taxon>Pseudomonadati</taxon>
        <taxon>Pseudomonadota</taxon>
        <taxon>Gammaproteobacteria</taxon>
        <taxon>Enterobacterales</taxon>
        <taxon>Yersiniaceae</taxon>
        <taxon>Yersinia</taxon>
    </lineage>
</organism>
<proteinExistence type="inferred from homology"/>
<protein>
    <recommendedName>
        <fullName evidence="1">Large ribosomal subunit protein bL34</fullName>
    </recommendedName>
    <alternativeName>
        <fullName evidence="3">50S ribosomal protein L34</fullName>
    </alternativeName>
</protein>
<name>RL34_YERPN</name>